<name>GLGB1_XANOR</name>
<organism>
    <name type="scientific">Xanthomonas oryzae pv. oryzae (strain KACC10331 / KXO85)</name>
    <dbReference type="NCBI Taxonomy" id="291331"/>
    <lineage>
        <taxon>Bacteria</taxon>
        <taxon>Pseudomonadati</taxon>
        <taxon>Pseudomonadota</taxon>
        <taxon>Gammaproteobacteria</taxon>
        <taxon>Lysobacterales</taxon>
        <taxon>Lysobacteraceae</taxon>
        <taxon>Xanthomonas</taxon>
    </lineage>
</organism>
<evidence type="ECO:0000255" key="1">
    <source>
        <dbReference type="HAMAP-Rule" id="MF_00685"/>
    </source>
</evidence>
<feature type="chain" id="PRO_0000188768" description="1,4-alpha-glucan branching enzyme GlgB 1">
    <location>
        <begin position="1"/>
        <end position="732"/>
    </location>
</feature>
<feature type="active site" description="Nucleophile" evidence="1">
    <location>
        <position position="411"/>
    </location>
</feature>
<feature type="active site" description="Proton donor" evidence="1">
    <location>
        <position position="464"/>
    </location>
</feature>
<sequence>MMSGVMTAVSNRWDPGVIRALAEARHGDAFAVLGAHRTDTGRVLRTYLPGAERVSAVLDDGQTIALEAGPEPGLFAGDLPAQGGYRLRIGWPGGEQDTADPYAFGPQLSDFDLHLISEGHHLQLADALGANVVEVDGVRGTRFAVWAPNASRVAVVGDFNSWDARRHPMRLRHQSGVWELFVPDVGPGAHYKYQLRGPHGHELPAKADPVARRAELAPGTASIVADPTPYQWSDDGWMATRARRQAHDAPMSVYEMHAGSWLREEGVDLDWDGLADHLIPYVADMGFTHVELMPVTEHPFGGSWGYQPLGLFAPTARFGTPDGFARFVDRCHREGIGVIVDWVPAHFPTDAHGLAHFDGTALYEHADPREGFHRDWNTLIYNHGRREVSGFLIASAMEFLQRYHVDGLRVDAVASMLYRDYSRNAGEWVPNIHGGRENYETIAFLRRLNALVREHTPGAVMIAEESTAFPGVTADVAHGGLGFHYKWNMGWMHDTLHYASLDPIYRRYHHGELTFSMVYAYSERFVLPISHDEVVHGKGSLLGRMPGDDWQRFANLRAYLGFMFTHPGRKLLFMGCEFGQPTEWNHDSGLPWHLLDDPRHRGVQTLVRDVNRLYVQYPALHAHDDDPSGFAWVVGDDAGNSVVAFLRKGKRGDAPVLVVINFTPVVQHGYRIGVPQGGQWREVFNSDAGIYGGANLGNGGIVTAEQQSMHGHAHALPLLLPPLGAIVLTPPG</sequence>
<accession>Q5H6H2</accession>
<protein>
    <recommendedName>
        <fullName evidence="1">1,4-alpha-glucan branching enzyme GlgB 1</fullName>
        <ecNumber evidence="1">2.4.1.18</ecNumber>
    </recommendedName>
    <alternativeName>
        <fullName evidence="1">1,4-alpha-D-glucan:1,4-alpha-D-glucan 6-glucosyl-transferase 1</fullName>
    </alternativeName>
    <alternativeName>
        <fullName evidence="1">Alpha-(1-&gt;4)-glucan branching enzyme 1</fullName>
    </alternativeName>
    <alternativeName>
        <fullName evidence="1">Glycogen branching enzyme 1</fullName>
        <shortName evidence="1">BE 1</shortName>
    </alternativeName>
</protein>
<reference key="1">
    <citation type="journal article" date="2005" name="Nucleic Acids Res.">
        <title>The genome sequence of Xanthomonas oryzae pathovar oryzae KACC10331, the bacterial blight pathogen of rice.</title>
        <authorList>
            <person name="Lee B.-M."/>
            <person name="Park Y.-J."/>
            <person name="Park D.-S."/>
            <person name="Kang H.-W."/>
            <person name="Kim J.-G."/>
            <person name="Song E.-S."/>
            <person name="Park I.-C."/>
            <person name="Yoon U.-H."/>
            <person name="Hahn J.-H."/>
            <person name="Koo B.-S."/>
            <person name="Lee G.-B."/>
            <person name="Kim H."/>
            <person name="Park H.-S."/>
            <person name="Yoon K.-O."/>
            <person name="Kim J.-H."/>
            <person name="Jung C.-H."/>
            <person name="Koh N.-H."/>
            <person name="Seo J.-S."/>
            <person name="Go S.-J."/>
        </authorList>
    </citation>
    <scope>NUCLEOTIDE SEQUENCE [LARGE SCALE GENOMIC DNA]</scope>
    <source>
        <strain>KACC10331 / KXO85</strain>
    </source>
</reference>
<keyword id="KW-0119">Carbohydrate metabolism</keyword>
<keyword id="KW-0320">Glycogen biosynthesis</keyword>
<keyword id="KW-0321">Glycogen metabolism</keyword>
<keyword id="KW-0328">Glycosyltransferase</keyword>
<keyword id="KW-1185">Reference proteome</keyword>
<keyword id="KW-0808">Transferase</keyword>
<comment type="function">
    <text evidence="1">Catalyzes the formation of the alpha-1,6-glucosidic linkages in glycogen by scission of a 1,4-alpha-linked oligosaccharide from growing alpha-1,4-glucan chains and the subsequent attachment of the oligosaccharide to the alpha-1,6 position.</text>
</comment>
<comment type="catalytic activity">
    <reaction evidence="1">
        <text>Transfers a segment of a (1-&gt;4)-alpha-D-glucan chain to a primary hydroxy group in a similar glucan chain.</text>
        <dbReference type="EC" id="2.4.1.18"/>
    </reaction>
</comment>
<comment type="pathway">
    <text evidence="1">Glycan biosynthesis; glycogen biosynthesis.</text>
</comment>
<comment type="subunit">
    <text evidence="1">Monomer.</text>
</comment>
<comment type="similarity">
    <text evidence="1">Belongs to the glycosyl hydrolase 13 family. GlgB subfamily.</text>
</comment>
<gene>
    <name evidence="1" type="primary">glgB1</name>
    <name type="ordered locus">XOO0194</name>
</gene>
<dbReference type="EC" id="2.4.1.18" evidence="1"/>
<dbReference type="EMBL" id="AE013598">
    <property type="protein sequence ID" value="AAW73448.1"/>
    <property type="molecule type" value="Genomic_DNA"/>
</dbReference>
<dbReference type="SMR" id="Q5H6H2"/>
<dbReference type="STRING" id="291331.XOO0194"/>
<dbReference type="CAZy" id="CBM48">
    <property type="family name" value="Carbohydrate-Binding Module Family 48"/>
</dbReference>
<dbReference type="CAZy" id="GH13">
    <property type="family name" value="Glycoside Hydrolase Family 13"/>
</dbReference>
<dbReference type="KEGG" id="xoo:XOO0194"/>
<dbReference type="HOGENOM" id="CLU_004245_3_2_6"/>
<dbReference type="UniPathway" id="UPA00164"/>
<dbReference type="Proteomes" id="UP000006735">
    <property type="component" value="Chromosome"/>
</dbReference>
<dbReference type="GO" id="GO:0005829">
    <property type="term" value="C:cytosol"/>
    <property type="evidence" value="ECO:0007669"/>
    <property type="project" value="TreeGrafter"/>
</dbReference>
<dbReference type="GO" id="GO:0003844">
    <property type="term" value="F:1,4-alpha-glucan branching enzyme activity"/>
    <property type="evidence" value="ECO:0007669"/>
    <property type="project" value="UniProtKB-UniRule"/>
</dbReference>
<dbReference type="GO" id="GO:0043169">
    <property type="term" value="F:cation binding"/>
    <property type="evidence" value="ECO:0007669"/>
    <property type="project" value="InterPro"/>
</dbReference>
<dbReference type="GO" id="GO:0004553">
    <property type="term" value="F:hydrolase activity, hydrolyzing O-glycosyl compounds"/>
    <property type="evidence" value="ECO:0007669"/>
    <property type="project" value="InterPro"/>
</dbReference>
<dbReference type="GO" id="GO:0005978">
    <property type="term" value="P:glycogen biosynthetic process"/>
    <property type="evidence" value="ECO:0007669"/>
    <property type="project" value="UniProtKB-UniRule"/>
</dbReference>
<dbReference type="CDD" id="cd11322">
    <property type="entry name" value="AmyAc_Glg_BE"/>
    <property type="match status" value="1"/>
</dbReference>
<dbReference type="CDD" id="cd02855">
    <property type="entry name" value="E_set_GBE_prok_N"/>
    <property type="match status" value="1"/>
</dbReference>
<dbReference type="FunFam" id="2.60.40.10:FF:000169">
    <property type="entry name" value="1,4-alpha-glucan branching enzyme GlgB"/>
    <property type="match status" value="1"/>
</dbReference>
<dbReference type="FunFam" id="2.60.40.1180:FF:000002">
    <property type="entry name" value="1,4-alpha-glucan branching enzyme GlgB"/>
    <property type="match status" value="1"/>
</dbReference>
<dbReference type="FunFam" id="3.20.20.80:FF:000003">
    <property type="entry name" value="1,4-alpha-glucan branching enzyme GlgB"/>
    <property type="match status" value="1"/>
</dbReference>
<dbReference type="Gene3D" id="3.20.20.80">
    <property type="entry name" value="Glycosidases"/>
    <property type="match status" value="1"/>
</dbReference>
<dbReference type="Gene3D" id="2.60.40.1180">
    <property type="entry name" value="Golgi alpha-mannosidase II"/>
    <property type="match status" value="1"/>
</dbReference>
<dbReference type="Gene3D" id="2.60.40.10">
    <property type="entry name" value="Immunoglobulins"/>
    <property type="match status" value="2"/>
</dbReference>
<dbReference type="HAMAP" id="MF_00685">
    <property type="entry name" value="GlgB"/>
    <property type="match status" value="1"/>
</dbReference>
<dbReference type="InterPro" id="IPR006048">
    <property type="entry name" value="A-amylase/branching_C"/>
</dbReference>
<dbReference type="InterPro" id="IPR037439">
    <property type="entry name" value="Branching_enzy"/>
</dbReference>
<dbReference type="InterPro" id="IPR006407">
    <property type="entry name" value="GlgB"/>
</dbReference>
<dbReference type="InterPro" id="IPR054169">
    <property type="entry name" value="GlgB_N"/>
</dbReference>
<dbReference type="InterPro" id="IPR044143">
    <property type="entry name" value="GlgB_N_E_set_prok"/>
</dbReference>
<dbReference type="InterPro" id="IPR006047">
    <property type="entry name" value="Glyco_hydro_13_cat_dom"/>
</dbReference>
<dbReference type="InterPro" id="IPR004193">
    <property type="entry name" value="Glyco_hydro_13_N"/>
</dbReference>
<dbReference type="InterPro" id="IPR013780">
    <property type="entry name" value="Glyco_hydro_b"/>
</dbReference>
<dbReference type="InterPro" id="IPR017853">
    <property type="entry name" value="Glycoside_hydrolase_SF"/>
</dbReference>
<dbReference type="InterPro" id="IPR013783">
    <property type="entry name" value="Ig-like_fold"/>
</dbReference>
<dbReference type="InterPro" id="IPR014756">
    <property type="entry name" value="Ig_E-set"/>
</dbReference>
<dbReference type="NCBIfam" id="TIGR01515">
    <property type="entry name" value="branching_enzym"/>
    <property type="match status" value="1"/>
</dbReference>
<dbReference type="NCBIfam" id="NF003811">
    <property type="entry name" value="PRK05402.1"/>
    <property type="match status" value="1"/>
</dbReference>
<dbReference type="NCBIfam" id="NF008967">
    <property type="entry name" value="PRK12313.1"/>
    <property type="match status" value="1"/>
</dbReference>
<dbReference type="PANTHER" id="PTHR43651">
    <property type="entry name" value="1,4-ALPHA-GLUCAN-BRANCHING ENZYME"/>
    <property type="match status" value="1"/>
</dbReference>
<dbReference type="PANTHER" id="PTHR43651:SF3">
    <property type="entry name" value="1,4-ALPHA-GLUCAN-BRANCHING ENZYME"/>
    <property type="match status" value="1"/>
</dbReference>
<dbReference type="Pfam" id="PF00128">
    <property type="entry name" value="Alpha-amylase"/>
    <property type="match status" value="1"/>
</dbReference>
<dbReference type="Pfam" id="PF02806">
    <property type="entry name" value="Alpha-amylase_C"/>
    <property type="match status" value="1"/>
</dbReference>
<dbReference type="Pfam" id="PF02922">
    <property type="entry name" value="CBM_48"/>
    <property type="match status" value="1"/>
</dbReference>
<dbReference type="Pfam" id="PF22019">
    <property type="entry name" value="GlgB_N"/>
    <property type="match status" value="1"/>
</dbReference>
<dbReference type="PIRSF" id="PIRSF000463">
    <property type="entry name" value="GlgB"/>
    <property type="match status" value="1"/>
</dbReference>
<dbReference type="SMART" id="SM00642">
    <property type="entry name" value="Aamy"/>
    <property type="match status" value="1"/>
</dbReference>
<dbReference type="SUPFAM" id="SSF51445">
    <property type="entry name" value="(Trans)glycosidases"/>
    <property type="match status" value="1"/>
</dbReference>
<dbReference type="SUPFAM" id="SSF81296">
    <property type="entry name" value="E set domains"/>
    <property type="match status" value="1"/>
</dbReference>
<dbReference type="SUPFAM" id="SSF51011">
    <property type="entry name" value="Glycosyl hydrolase domain"/>
    <property type="match status" value="1"/>
</dbReference>
<proteinExistence type="inferred from homology"/>